<sequence length="104" mass="11669">MSPRKTYILKLYVAGNTPNSMRALKTLRNILETEFRGVYALKVIDVLKNPQLAEEDKILATPTLSKILPPPVRRIIGDLSDRERVLIGLDLLYDELADNAFSSG</sequence>
<protein>
    <recommendedName>
        <fullName evidence="1">Circadian clock oscillator protein KaiB</fullName>
    </recommendedName>
</protein>
<keyword id="KW-0090">Biological rhythms</keyword>
<comment type="function">
    <text evidence="1">Key component of the KaiABC oscillator complex, which constitutes the main circadian regulator in cyanobacteria. Complex composition changes during the circadian cycle to control KaiC phosphorylation. KaiA stimulates KaiC autophosphorylation, while KaiB sequesters KaiA, leading to KaiC autodephosphorylation. Phospho-Ser-431 KaiC accumulation triggers binding of KaiB to form the KaiB(6):KaiC(6) complex, leading to changes in output regulators CikA and SasA. KaiB switches to a thioredoxin-like fold (KaiB(fs)) when bound to KaiC. KaiB(6):KaiC(6) formation exposes a site for KaiA binding that sequesters KaiA from KaiC, making the KaiC(6):KaiB(6):KaiA(12) complex that results in KaiC autodephosphorylation.</text>
</comment>
<comment type="function">
    <text evidence="1">A metamorphic protein which reversibly switches between an inactive tetrameric fold and a rare, thioredoxin-like monomeric fold (KaiB(fs)). KaiB(fs) binds phospho-KaiC, KaiA and CikA. KaiA and CikA compete for binding to KaiB(fs), and KaiB(fs) and SasA compete for binding to KaiC, thus the clock oscillator and output signal pathway are tightly coupled.</text>
</comment>
<comment type="subunit">
    <text evidence="1">The KaiABC complex composition changes during the circadian cycle to control KaiC phosphorylation. Complexes KaiC(6), KaiA(2-4):KaiC(6), KaiB(6):KaiC(6) and KaiC(6):KaiB(6):KaiA(12) are among the most important forms, many form cooperatively. Undergoes a major conformational rearrangment; in the free state forms homotetramers as a dimer of dimers. When bound to the CI domain of KaiC switches to a monomeric thioredoxin-fold (KaiB(fs)). KaiB(fs) binds CikA, leading it to dephosphorylate phospho-RpaA.</text>
</comment>
<comment type="domain">
    <text evidence="1">Has 2 forms, fold switches to a thioredoxin-like fold (KaiB(fs)) when bound to KaiC.</text>
</comment>
<comment type="similarity">
    <text evidence="1">Belongs to the KaiB family.</text>
</comment>
<accession>Q7U8R4</accession>
<evidence type="ECO:0000255" key="1">
    <source>
        <dbReference type="HAMAP-Rule" id="MF_01835"/>
    </source>
</evidence>
<proteinExistence type="inferred from homology"/>
<reference key="1">
    <citation type="journal article" date="2003" name="Nature">
        <title>The genome of a motile marine Synechococcus.</title>
        <authorList>
            <person name="Palenik B."/>
            <person name="Brahamsha B."/>
            <person name="Larimer F.W."/>
            <person name="Land M.L."/>
            <person name="Hauser L."/>
            <person name="Chain P."/>
            <person name="Lamerdin J.E."/>
            <person name="Regala W."/>
            <person name="Allen E.E."/>
            <person name="McCarren J."/>
            <person name="Paulsen I.T."/>
            <person name="Dufresne A."/>
            <person name="Partensky F."/>
            <person name="Webb E.A."/>
            <person name="Waterbury J."/>
        </authorList>
    </citation>
    <scope>NUCLEOTIDE SEQUENCE [LARGE SCALE GENOMIC DNA]</scope>
    <source>
        <strain>WH8102</strain>
    </source>
</reference>
<feature type="chain" id="PRO_0000217769" description="Circadian clock oscillator protein KaiB">
    <location>
        <begin position="1"/>
        <end position="104"/>
    </location>
</feature>
<name>KAIB_PARMW</name>
<dbReference type="EMBL" id="BX569690">
    <property type="protein sequence ID" value="CAE07064.1"/>
    <property type="molecule type" value="Genomic_DNA"/>
</dbReference>
<dbReference type="RefSeq" id="WP_011127418.1">
    <property type="nucleotide sequence ID" value="NC_005070.1"/>
</dbReference>
<dbReference type="SMR" id="Q7U8R4"/>
<dbReference type="STRING" id="84588.SYNW0549"/>
<dbReference type="KEGG" id="syw:SYNW0549"/>
<dbReference type="eggNOG" id="COG4251">
    <property type="taxonomic scope" value="Bacteria"/>
</dbReference>
<dbReference type="HOGENOM" id="CLU_144073_0_0_3"/>
<dbReference type="Proteomes" id="UP000001422">
    <property type="component" value="Chromosome"/>
</dbReference>
<dbReference type="GO" id="GO:0007623">
    <property type="term" value="P:circadian rhythm"/>
    <property type="evidence" value="ECO:0007669"/>
    <property type="project" value="UniProtKB-UniRule"/>
</dbReference>
<dbReference type="CDD" id="cd02978">
    <property type="entry name" value="KaiB_like"/>
    <property type="match status" value="1"/>
</dbReference>
<dbReference type="Gene3D" id="3.40.30.10">
    <property type="entry name" value="Glutaredoxin"/>
    <property type="match status" value="1"/>
</dbReference>
<dbReference type="HAMAP" id="MF_01835">
    <property type="entry name" value="KaiB"/>
    <property type="match status" value="1"/>
</dbReference>
<dbReference type="InterPro" id="IPR013474">
    <property type="entry name" value="Circ_KaiB"/>
</dbReference>
<dbReference type="InterPro" id="IPR039022">
    <property type="entry name" value="KaiB-like"/>
</dbReference>
<dbReference type="InterPro" id="IPR011649">
    <property type="entry name" value="KaiB_domain"/>
</dbReference>
<dbReference type="InterPro" id="IPR036249">
    <property type="entry name" value="Thioredoxin-like_sf"/>
</dbReference>
<dbReference type="NCBIfam" id="TIGR02654">
    <property type="entry name" value="circ_KaiB"/>
    <property type="match status" value="1"/>
</dbReference>
<dbReference type="NCBIfam" id="NF006798">
    <property type="entry name" value="PRK09301.1"/>
    <property type="match status" value="1"/>
</dbReference>
<dbReference type="PANTHER" id="PTHR41709:SF2">
    <property type="entry name" value="CIRCADIAN CLOCK PROTEIN KAIB2"/>
    <property type="match status" value="1"/>
</dbReference>
<dbReference type="PANTHER" id="PTHR41709">
    <property type="entry name" value="KAIB-LIKE PROTEIN 1"/>
    <property type="match status" value="1"/>
</dbReference>
<dbReference type="Pfam" id="PF07689">
    <property type="entry name" value="KaiB"/>
    <property type="match status" value="1"/>
</dbReference>
<dbReference type="SMART" id="SM01248">
    <property type="entry name" value="KaiB"/>
    <property type="match status" value="1"/>
</dbReference>
<dbReference type="SUPFAM" id="SSF52833">
    <property type="entry name" value="Thioredoxin-like"/>
    <property type="match status" value="1"/>
</dbReference>
<organism>
    <name type="scientific">Parasynechococcus marenigrum (strain WH8102)</name>
    <dbReference type="NCBI Taxonomy" id="84588"/>
    <lineage>
        <taxon>Bacteria</taxon>
        <taxon>Bacillati</taxon>
        <taxon>Cyanobacteriota</taxon>
        <taxon>Cyanophyceae</taxon>
        <taxon>Synechococcales</taxon>
        <taxon>Prochlorococcaceae</taxon>
        <taxon>Parasynechococcus</taxon>
        <taxon>Parasynechococcus marenigrum</taxon>
    </lineage>
</organism>
<gene>
    <name evidence="1" type="primary">kaiB</name>
    <name type="ordered locus">SYNW0549</name>
</gene>